<keyword id="KW-0413">Isomerase</keyword>
<keyword id="KW-0819">tRNA processing</keyword>
<comment type="function">
    <text evidence="1">Responsible for synthesis of pseudouridine from uracil-55 in the psi GC loop of transfer RNAs.</text>
</comment>
<comment type="catalytic activity">
    <reaction evidence="1">
        <text>uridine(55) in tRNA = pseudouridine(55) in tRNA</text>
        <dbReference type="Rhea" id="RHEA:42532"/>
        <dbReference type="Rhea" id="RHEA-COMP:10101"/>
        <dbReference type="Rhea" id="RHEA-COMP:10102"/>
        <dbReference type="ChEBI" id="CHEBI:65314"/>
        <dbReference type="ChEBI" id="CHEBI:65315"/>
        <dbReference type="EC" id="5.4.99.25"/>
    </reaction>
</comment>
<comment type="similarity">
    <text evidence="1">Belongs to the pseudouridine synthase TruB family. Type 1 subfamily.</text>
</comment>
<proteinExistence type="inferred from homology"/>
<gene>
    <name evidence="1" type="primary">truB</name>
    <name type="ordered locus">BURPS1710b_1917</name>
</gene>
<organism>
    <name type="scientific">Burkholderia pseudomallei (strain 1710b)</name>
    <dbReference type="NCBI Taxonomy" id="320372"/>
    <lineage>
        <taxon>Bacteria</taxon>
        <taxon>Pseudomonadati</taxon>
        <taxon>Pseudomonadota</taxon>
        <taxon>Betaproteobacteria</taxon>
        <taxon>Burkholderiales</taxon>
        <taxon>Burkholderiaceae</taxon>
        <taxon>Burkholderia</taxon>
        <taxon>pseudomallei group</taxon>
    </lineage>
</organism>
<sequence>MARRALDGVLLLDKPVGLSSNDALMRAKRLYQAKKAGHTGTLDPLASGLLPLCFGEATKFSQDLLEADKTYEATMRLGVRTTTGDAEGDVLDTRDVSCDEAAVRAALARFVGEIVQVPPMYSALKRDGKPLYEYARAGQTVEREGRTVTIRALALVSCALPDVTFRVTCSKGTYVRTLAEDIGEALGCGAHLTMLRRTGVGPLTLEHAVTLDALDAATQDERDARLAPVDALLSTFPCVKLDAALATRFLHGQRLKLSELAARPDAAEGGRVRVYDADDRLLGVARASEGVLAPERLVVTGA</sequence>
<name>TRUB_BURP1</name>
<protein>
    <recommendedName>
        <fullName evidence="1">tRNA pseudouridine synthase B</fullName>
        <ecNumber evidence="1">5.4.99.25</ecNumber>
    </recommendedName>
    <alternativeName>
        <fullName evidence="1">tRNA pseudouridine(55) synthase</fullName>
        <shortName evidence="1">Psi55 synthase</shortName>
    </alternativeName>
    <alternativeName>
        <fullName evidence="1">tRNA pseudouridylate synthase</fullName>
    </alternativeName>
    <alternativeName>
        <fullName evidence="1">tRNA-uridine isomerase</fullName>
    </alternativeName>
</protein>
<reference key="1">
    <citation type="journal article" date="2010" name="Genome Biol. Evol.">
        <title>Continuing evolution of Burkholderia mallei through genome reduction and large-scale rearrangements.</title>
        <authorList>
            <person name="Losada L."/>
            <person name="Ronning C.M."/>
            <person name="DeShazer D."/>
            <person name="Woods D."/>
            <person name="Fedorova N."/>
            <person name="Kim H.S."/>
            <person name="Shabalina S.A."/>
            <person name="Pearson T.R."/>
            <person name="Brinkac L."/>
            <person name="Tan P."/>
            <person name="Nandi T."/>
            <person name="Crabtree J."/>
            <person name="Badger J."/>
            <person name="Beckstrom-Sternberg S."/>
            <person name="Saqib M."/>
            <person name="Schutzer S.E."/>
            <person name="Keim P."/>
            <person name="Nierman W.C."/>
        </authorList>
    </citation>
    <scope>NUCLEOTIDE SEQUENCE [LARGE SCALE GENOMIC DNA]</scope>
    <source>
        <strain>1710b</strain>
    </source>
</reference>
<feature type="chain" id="PRO_0000229345" description="tRNA pseudouridine synthase B">
    <location>
        <begin position="1"/>
        <end position="302"/>
    </location>
</feature>
<feature type="active site" description="Nucleophile" evidence="1">
    <location>
        <position position="43"/>
    </location>
</feature>
<dbReference type="EC" id="5.4.99.25" evidence="1"/>
<dbReference type="EMBL" id="CP000124">
    <property type="protein sequence ID" value="ABA48885.1"/>
    <property type="molecule type" value="Genomic_DNA"/>
</dbReference>
<dbReference type="RefSeq" id="WP_004191673.1">
    <property type="nucleotide sequence ID" value="NC_007434.1"/>
</dbReference>
<dbReference type="SMR" id="Q3JSY7"/>
<dbReference type="EnsemblBacteria" id="ABA48885">
    <property type="protein sequence ID" value="ABA48885"/>
    <property type="gene ID" value="BURPS1710b_1917"/>
</dbReference>
<dbReference type="GeneID" id="93060075"/>
<dbReference type="KEGG" id="bpm:BURPS1710b_1917"/>
<dbReference type="HOGENOM" id="CLU_032087_0_3_4"/>
<dbReference type="Proteomes" id="UP000002700">
    <property type="component" value="Chromosome I"/>
</dbReference>
<dbReference type="GO" id="GO:0003723">
    <property type="term" value="F:RNA binding"/>
    <property type="evidence" value="ECO:0007669"/>
    <property type="project" value="InterPro"/>
</dbReference>
<dbReference type="GO" id="GO:0160148">
    <property type="term" value="F:tRNA pseudouridine(55) synthase activity"/>
    <property type="evidence" value="ECO:0007669"/>
    <property type="project" value="UniProtKB-EC"/>
</dbReference>
<dbReference type="GO" id="GO:1990481">
    <property type="term" value="P:mRNA pseudouridine synthesis"/>
    <property type="evidence" value="ECO:0007669"/>
    <property type="project" value="TreeGrafter"/>
</dbReference>
<dbReference type="GO" id="GO:0031119">
    <property type="term" value="P:tRNA pseudouridine synthesis"/>
    <property type="evidence" value="ECO:0007669"/>
    <property type="project" value="UniProtKB-UniRule"/>
</dbReference>
<dbReference type="CDD" id="cd02573">
    <property type="entry name" value="PseudoU_synth_EcTruB"/>
    <property type="match status" value="1"/>
</dbReference>
<dbReference type="CDD" id="cd21152">
    <property type="entry name" value="PUA_TruB_bacterial"/>
    <property type="match status" value="1"/>
</dbReference>
<dbReference type="FunFam" id="3.30.2350.10:FF:000011">
    <property type="entry name" value="tRNA pseudouridine synthase B"/>
    <property type="match status" value="1"/>
</dbReference>
<dbReference type="Gene3D" id="3.30.2350.10">
    <property type="entry name" value="Pseudouridine synthase"/>
    <property type="match status" value="1"/>
</dbReference>
<dbReference type="Gene3D" id="2.30.130.10">
    <property type="entry name" value="PUA domain"/>
    <property type="match status" value="1"/>
</dbReference>
<dbReference type="HAMAP" id="MF_01080">
    <property type="entry name" value="TruB_bact"/>
    <property type="match status" value="1"/>
</dbReference>
<dbReference type="InterPro" id="IPR020103">
    <property type="entry name" value="PsdUridine_synth_cat_dom_sf"/>
</dbReference>
<dbReference type="InterPro" id="IPR002501">
    <property type="entry name" value="PsdUridine_synth_N"/>
</dbReference>
<dbReference type="InterPro" id="IPR015947">
    <property type="entry name" value="PUA-like_sf"/>
</dbReference>
<dbReference type="InterPro" id="IPR036974">
    <property type="entry name" value="PUA_sf"/>
</dbReference>
<dbReference type="InterPro" id="IPR014780">
    <property type="entry name" value="tRNA_psdUridine_synth_TruB"/>
</dbReference>
<dbReference type="InterPro" id="IPR015240">
    <property type="entry name" value="tRNA_sdUridine_synth_fam1_C"/>
</dbReference>
<dbReference type="InterPro" id="IPR032819">
    <property type="entry name" value="TruB_C"/>
</dbReference>
<dbReference type="NCBIfam" id="TIGR00431">
    <property type="entry name" value="TruB"/>
    <property type="match status" value="1"/>
</dbReference>
<dbReference type="PANTHER" id="PTHR13767:SF2">
    <property type="entry name" value="PSEUDOURIDYLATE SYNTHASE TRUB1"/>
    <property type="match status" value="1"/>
</dbReference>
<dbReference type="PANTHER" id="PTHR13767">
    <property type="entry name" value="TRNA-PSEUDOURIDINE SYNTHASE"/>
    <property type="match status" value="1"/>
</dbReference>
<dbReference type="Pfam" id="PF09157">
    <property type="entry name" value="TruB-C_2"/>
    <property type="match status" value="1"/>
</dbReference>
<dbReference type="Pfam" id="PF16198">
    <property type="entry name" value="TruB_C_2"/>
    <property type="match status" value="1"/>
</dbReference>
<dbReference type="Pfam" id="PF01509">
    <property type="entry name" value="TruB_N"/>
    <property type="match status" value="1"/>
</dbReference>
<dbReference type="SUPFAM" id="SSF55120">
    <property type="entry name" value="Pseudouridine synthase"/>
    <property type="match status" value="1"/>
</dbReference>
<dbReference type="SUPFAM" id="SSF88697">
    <property type="entry name" value="PUA domain-like"/>
    <property type="match status" value="1"/>
</dbReference>
<accession>Q3JSY7</accession>
<evidence type="ECO:0000255" key="1">
    <source>
        <dbReference type="HAMAP-Rule" id="MF_01080"/>
    </source>
</evidence>